<reference key="1">
    <citation type="submission" date="2003-03" db="EMBL/GenBank/DDBJ databases">
        <title>African swine fever virus genomes.</title>
        <authorList>
            <person name="Kutish G.F."/>
            <person name="Rock D.L."/>
        </authorList>
    </citation>
    <scope>NUCLEOTIDE SEQUENCE [LARGE SCALE GENOMIC DNA]</scope>
</reference>
<name>RPB5_ASFK5</name>
<organism>
    <name type="scientific">African swine fever virus (isolate Pig/Kenya/KEN-50/1950)</name>
    <name type="common">ASFV</name>
    <dbReference type="NCBI Taxonomy" id="561445"/>
    <lineage>
        <taxon>Viruses</taxon>
        <taxon>Varidnaviria</taxon>
        <taxon>Bamfordvirae</taxon>
        <taxon>Nucleocytoviricota</taxon>
        <taxon>Pokkesviricetes</taxon>
        <taxon>Asfuvirales</taxon>
        <taxon>Asfarviridae</taxon>
        <taxon>Asfivirus</taxon>
        <taxon>African swine fever virus</taxon>
    </lineage>
</organism>
<feature type="chain" id="PRO_0000373126" description="DNA-directed RNA polymerase RPB5 homolog">
    <location>
        <begin position="1"/>
        <end position="205"/>
    </location>
</feature>
<evidence type="ECO:0000250" key="1">
    <source>
        <dbReference type="UniProtKB" id="P19388"/>
    </source>
</evidence>
<evidence type="ECO:0000250" key="2">
    <source>
        <dbReference type="UniProtKB" id="Q65181"/>
    </source>
</evidence>
<evidence type="ECO:0000305" key="3"/>
<keyword id="KW-0240">DNA-directed RNA polymerase</keyword>
<keyword id="KW-1035">Host cytoplasm</keyword>
<keyword id="KW-0804">Transcription</keyword>
<keyword id="KW-1195">Viral transcription</keyword>
<keyword id="KW-0946">Virion</keyword>
<protein>
    <recommendedName>
        <fullName evidence="2">DNA-directed RNA polymerase RPB5 homolog</fullName>
        <shortName evidence="3">RPB5 homolog</shortName>
    </recommendedName>
</protein>
<gene>
    <name type="ordered locus">Ken-120</name>
</gene>
<accession>P0C9B6</accession>
<sequence>MAMQKLFTYIYEFIEYRKMVLLEEKVPYDKFVQMIFNTGFFRINAETLNHGIVSVFIFGANGKYVHHGGDMRTLLTNALNEKKQYEELILIVDKPILGKKNILDIIVEQRAANPTVVINIYPYHLFCINIPKVSAIPRHKLITQEEAQAFLGREYLQPQDLMQISASDPPVVWLGGRPGDFVQIERPSETAMHAVVIRYITKSKI</sequence>
<comment type="function">
    <text evidence="1">Component of the DNA-directed RNA polymerase (RNAP) that catalyzes the transcription in the cytoplasm of viral DNA into RNA using the four ribonucleoside triphosphates as substrates.</text>
</comment>
<comment type="subunit">
    <text evidence="2">Part of the viral DNA-directed RNA polymerase that consists of 8 polII-like subunits (RPB1, RPB2, RPB3, RPB5, RPB6, RPB7, RPB9, RPB10), a capping enzyme and a termination factor.</text>
</comment>
<comment type="subcellular location">
    <subcellularLocation>
        <location evidence="3">Host cytoplasm</location>
    </subcellularLocation>
    <subcellularLocation>
        <location evidence="2">Virion</location>
    </subcellularLocation>
    <text evidence="2">Found in association with viral nucleoid.</text>
</comment>
<comment type="similarity">
    <text evidence="3">Belongs to the archaeal RpoH/eukaryotic RPB5 RNA polymerase subunit family.</text>
</comment>
<organismHost>
    <name type="scientific">Ornithodoros</name>
    <name type="common">relapsing fever ticks</name>
    <dbReference type="NCBI Taxonomy" id="6937"/>
</organismHost>
<organismHost>
    <name type="scientific">Phacochoerus aethiopicus</name>
    <name type="common">Warthog</name>
    <dbReference type="NCBI Taxonomy" id="85517"/>
</organismHost>
<organismHost>
    <name type="scientific">Phacochoerus africanus</name>
    <name type="common">Warthog</name>
    <dbReference type="NCBI Taxonomy" id="41426"/>
</organismHost>
<organismHost>
    <name type="scientific">Potamochoerus larvatus</name>
    <name type="common">Bushpig</name>
    <dbReference type="NCBI Taxonomy" id="273792"/>
</organismHost>
<organismHost>
    <name type="scientific">Sus scrofa</name>
    <name type="common">Pig</name>
    <dbReference type="NCBI Taxonomy" id="9823"/>
</organismHost>
<proteinExistence type="inferred from homology"/>
<dbReference type="EMBL" id="AY261360">
    <property type="status" value="NOT_ANNOTATED_CDS"/>
    <property type="molecule type" value="Genomic_DNA"/>
</dbReference>
<dbReference type="SMR" id="P0C9B6"/>
<dbReference type="Proteomes" id="UP000000861">
    <property type="component" value="Segment"/>
</dbReference>
<dbReference type="GO" id="GO:0000428">
    <property type="term" value="C:DNA-directed RNA polymerase complex"/>
    <property type="evidence" value="ECO:0007669"/>
    <property type="project" value="UniProtKB-KW"/>
</dbReference>
<dbReference type="GO" id="GO:0030430">
    <property type="term" value="C:host cell cytoplasm"/>
    <property type="evidence" value="ECO:0007669"/>
    <property type="project" value="UniProtKB-SubCell"/>
</dbReference>
<dbReference type="GO" id="GO:0044423">
    <property type="term" value="C:virion component"/>
    <property type="evidence" value="ECO:0007669"/>
    <property type="project" value="UniProtKB-KW"/>
</dbReference>
<dbReference type="GO" id="GO:0003677">
    <property type="term" value="F:DNA binding"/>
    <property type="evidence" value="ECO:0007669"/>
    <property type="project" value="InterPro"/>
</dbReference>
<dbReference type="GO" id="GO:0003899">
    <property type="term" value="F:DNA-directed RNA polymerase activity"/>
    <property type="evidence" value="ECO:0007669"/>
    <property type="project" value="InterPro"/>
</dbReference>
<dbReference type="GO" id="GO:0006366">
    <property type="term" value="P:transcription by RNA polymerase II"/>
    <property type="evidence" value="ECO:0007669"/>
    <property type="project" value="TreeGrafter"/>
</dbReference>
<dbReference type="GO" id="GO:0006362">
    <property type="term" value="P:transcription elongation by RNA polymerase I"/>
    <property type="evidence" value="ECO:0007669"/>
    <property type="project" value="TreeGrafter"/>
</dbReference>
<dbReference type="GO" id="GO:0042797">
    <property type="term" value="P:tRNA transcription by RNA polymerase III"/>
    <property type="evidence" value="ECO:0007669"/>
    <property type="project" value="TreeGrafter"/>
</dbReference>
<dbReference type="GO" id="GO:0019083">
    <property type="term" value="P:viral transcription"/>
    <property type="evidence" value="ECO:0007669"/>
    <property type="project" value="UniProtKB-KW"/>
</dbReference>
<dbReference type="Gene3D" id="3.90.940.20">
    <property type="entry name" value="RPB5-like RNA polymerase subunit"/>
    <property type="match status" value="1"/>
</dbReference>
<dbReference type="InterPro" id="IPR014381">
    <property type="entry name" value="Arch_Rpo5/euc_Rpb5"/>
</dbReference>
<dbReference type="InterPro" id="IPR000783">
    <property type="entry name" value="RNA_pol_subH/Rpb5_C"/>
</dbReference>
<dbReference type="InterPro" id="IPR035913">
    <property type="entry name" value="RPB5-like_sf"/>
</dbReference>
<dbReference type="PANTHER" id="PTHR10535">
    <property type="entry name" value="DNA-DIRECTED RNA POLYMERASES I, II, AND III SUBUNIT RPABC1"/>
    <property type="match status" value="1"/>
</dbReference>
<dbReference type="PANTHER" id="PTHR10535:SF0">
    <property type="entry name" value="DNA-DIRECTED RNA POLYMERASES I, II, AND III SUBUNIT RPABC1"/>
    <property type="match status" value="1"/>
</dbReference>
<dbReference type="Pfam" id="PF01191">
    <property type="entry name" value="RNA_pol_Rpb5_C"/>
    <property type="match status" value="1"/>
</dbReference>
<dbReference type="SUPFAM" id="SSF55287">
    <property type="entry name" value="RPB5-like RNA polymerase subunit"/>
    <property type="match status" value="1"/>
</dbReference>